<proteinExistence type="inferred from homology"/>
<keyword id="KW-0149">Chlorophyll biosynthesis</keyword>
<keyword id="KW-0963">Cytoplasm</keyword>
<keyword id="KW-0413">Isomerase</keyword>
<keyword id="KW-0627">Porphyrin biosynthesis</keyword>
<keyword id="KW-0663">Pyridoxal phosphate</keyword>
<organism>
    <name type="scientific">Chlorobium phaeobacteroides (strain BS1)</name>
    <dbReference type="NCBI Taxonomy" id="331678"/>
    <lineage>
        <taxon>Bacteria</taxon>
        <taxon>Pseudomonadati</taxon>
        <taxon>Chlorobiota</taxon>
        <taxon>Chlorobiia</taxon>
        <taxon>Chlorobiales</taxon>
        <taxon>Chlorobiaceae</taxon>
        <taxon>Chlorobium/Pelodictyon group</taxon>
        <taxon>Chlorobium</taxon>
    </lineage>
</organism>
<protein>
    <recommendedName>
        <fullName evidence="1">Glutamate-1-semialdehyde 2,1-aminomutase</fullName>
        <shortName evidence="1">GSA</shortName>
        <ecNumber evidence="1">5.4.3.8</ecNumber>
    </recommendedName>
    <alternativeName>
        <fullName evidence="1">Glutamate-1-semialdehyde aminotransferase</fullName>
        <shortName evidence="1">GSA-AT</shortName>
    </alternativeName>
</protein>
<gene>
    <name evidence="1" type="primary">hemL</name>
    <name type="ordered locus">Cphamn1_0202</name>
</gene>
<comment type="catalytic activity">
    <reaction evidence="1">
        <text>(S)-4-amino-5-oxopentanoate = 5-aminolevulinate</text>
        <dbReference type="Rhea" id="RHEA:14265"/>
        <dbReference type="ChEBI" id="CHEBI:57501"/>
        <dbReference type="ChEBI" id="CHEBI:356416"/>
        <dbReference type="EC" id="5.4.3.8"/>
    </reaction>
</comment>
<comment type="cofactor">
    <cofactor evidence="1">
        <name>pyridoxal 5'-phosphate</name>
        <dbReference type="ChEBI" id="CHEBI:597326"/>
    </cofactor>
</comment>
<comment type="pathway">
    <text evidence="1">Porphyrin-containing compound metabolism; protoporphyrin-IX biosynthesis; 5-aminolevulinate from L-glutamyl-tRNA(Glu): step 2/2.</text>
</comment>
<comment type="pathway">
    <text evidence="1">Porphyrin-containing compound metabolism; chlorophyll biosynthesis.</text>
</comment>
<comment type="subunit">
    <text evidence="1">Homodimer.</text>
</comment>
<comment type="subcellular location">
    <subcellularLocation>
        <location evidence="1">Cytoplasm</location>
    </subcellularLocation>
</comment>
<comment type="similarity">
    <text evidence="1">Belongs to the class-III pyridoxal-phosphate-dependent aminotransferase family. HemL subfamily.</text>
</comment>
<sequence length="431" mass="46503">MPQLTRSAELFEKAKQFIPGGVNSPVRAFKSVGGTPIFMAKGQGAYMTDVDGNTYLDYVGSWGPFILGSMHPRITAAIENTLTKIGTSFGTPIEMEIEIAELLTQIVPSIEMVRMVNSGTEATMSAVRLARGYTGRDKIIKFEGCYHGHGDSFLIKAGSGALTLGAPDSPGVTKGTANDTLNAKYNDIESVRVLVKENKDSIAAIIIEPVAGNTGVIPAKTDFLQALRDLCTEEGIVLIFDEVMCGFRVALGGAQERYGITPDLTTMGKIIGGGLPVGAFGGKREIMQRVAPIGDVYQAGTLSGNPLALTAGLETLKILRDDNPYPELERKAAFLEEGFRDNMNKLGLSYVQNRVGSMACLFFTETPVENYDTAITCDLKKYGKYYHSMLDQGIYLAPSQFEAMFTSAVMTDEDLEKTVKANYVALQAAEA</sequence>
<evidence type="ECO:0000255" key="1">
    <source>
        <dbReference type="HAMAP-Rule" id="MF_00375"/>
    </source>
</evidence>
<accession>B3EKJ7</accession>
<feature type="chain" id="PRO_1000121866" description="Glutamate-1-semialdehyde 2,1-aminomutase">
    <location>
        <begin position="1"/>
        <end position="431"/>
    </location>
</feature>
<feature type="modified residue" description="N6-(pyridoxal phosphate)lysine" evidence="1">
    <location>
        <position position="269"/>
    </location>
</feature>
<reference key="1">
    <citation type="submission" date="2008-06" db="EMBL/GenBank/DDBJ databases">
        <title>Complete sequence of Chlorobium phaeobacteroides BS1.</title>
        <authorList>
            <consortium name="US DOE Joint Genome Institute"/>
            <person name="Lucas S."/>
            <person name="Copeland A."/>
            <person name="Lapidus A."/>
            <person name="Glavina del Rio T."/>
            <person name="Dalin E."/>
            <person name="Tice H."/>
            <person name="Bruce D."/>
            <person name="Goodwin L."/>
            <person name="Pitluck S."/>
            <person name="Schmutz J."/>
            <person name="Larimer F."/>
            <person name="Land M."/>
            <person name="Hauser L."/>
            <person name="Kyrpides N."/>
            <person name="Ovchinnikova G."/>
            <person name="Li T."/>
            <person name="Liu Z."/>
            <person name="Zhao F."/>
            <person name="Overmann J."/>
            <person name="Bryant D.A."/>
            <person name="Richardson P."/>
        </authorList>
    </citation>
    <scope>NUCLEOTIDE SEQUENCE [LARGE SCALE GENOMIC DNA]</scope>
    <source>
        <strain>BS1</strain>
    </source>
</reference>
<name>GSA_CHLPB</name>
<dbReference type="EC" id="5.4.3.8" evidence="1"/>
<dbReference type="EMBL" id="CP001101">
    <property type="protein sequence ID" value="ACE03175.1"/>
    <property type="molecule type" value="Genomic_DNA"/>
</dbReference>
<dbReference type="SMR" id="B3EKJ7"/>
<dbReference type="STRING" id="331678.Cphamn1_0202"/>
<dbReference type="KEGG" id="cpb:Cphamn1_0202"/>
<dbReference type="eggNOG" id="COG0001">
    <property type="taxonomic scope" value="Bacteria"/>
</dbReference>
<dbReference type="HOGENOM" id="CLU_016922_1_5_10"/>
<dbReference type="OrthoDB" id="9807885at2"/>
<dbReference type="UniPathway" id="UPA00251">
    <property type="reaction ID" value="UER00317"/>
</dbReference>
<dbReference type="UniPathway" id="UPA00668"/>
<dbReference type="GO" id="GO:0005737">
    <property type="term" value="C:cytoplasm"/>
    <property type="evidence" value="ECO:0007669"/>
    <property type="project" value="UniProtKB-SubCell"/>
</dbReference>
<dbReference type="GO" id="GO:0042286">
    <property type="term" value="F:glutamate-1-semialdehyde 2,1-aminomutase activity"/>
    <property type="evidence" value="ECO:0007669"/>
    <property type="project" value="UniProtKB-UniRule"/>
</dbReference>
<dbReference type="GO" id="GO:0030170">
    <property type="term" value="F:pyridoxal phosphate binding"/>
    <property type="evidence" value="ECO:0007669"/>
    <property type="project" value="InterPro"/>
</dbReference>
<dbReference type="GO" id="GO:0008483">
    <property type="term" value="F:transaminase activity"/>
    <property type="evidence" value="ECO:0007669"/>
    <property type="project" value="InterPro"/>
</dbReference>
<dbReference type="GO" id="GO:0015995">
    <property type="term" value="P:chlorophyll biosynthetic process"/>
    <property type="evidence" value="ECO:0007669"/>
    <property type="project" value="UniProtKB-UniPathway"/>
</dbReference>
<dbReference type="GO" id="GO:0006782">
    <property type="term" value="P:protoporphyrinogen IX biosynthetic process"/>
    <property type="evidence" value="ECO:0007669"/>
    <property type="project" value="UniProtKB-UniRule"/>
</dbReference>
<dbReference type="CDD" id="cd00610">
    <property type="entry name" value="OAT_like"/>
    <property type="match status" value="1"/>
</dbReference>
<dbReference type="FunFam" id="3.40.640.10:FF:000021">
    <property type="entry name" value="Glutamate-1-semialdehyde 2,1-aminomutase"/>
    <property type="match status" value="1"/>
</dbReference>
<dbReference type="Gene3D" id="3.90.1150.10">
    <property type="entry name" value="Aspartate Aminotransferase, domain 1"/>
    <property type="match status" value="1"/>
</dbReference>
<dbReference type="Gene3D" id="3.40.640.10">
    <property type="entry name" value="Type I PLP-dependent aspartate aminotransferase-like (Major domain)"/>
    <property type="match status" value="1"/>
</dbReference>
<dbReference type="HAMAP" id="MF_00375">
    <property type="entry name" value="HemL_aminotrans_3"/>
    <property type="match status" value="1"/>
</dbReference>
<dbReference type="InterPro" id="IPR004639">
    <property type="entry name" value="4pyrrol_synth_GluAld_NH2Trfase"/>
</dbReference>
<dbReference type="InterPro" id="IPR005814">
    <property type="entry name" value="Aminotrans_3"/>
</dbReference>
<dbReference type="InterPro" id="IPR049704">
    <property type="entry name" value="Aminotrans_3_PPA_site"/>
</dbReference>
<dbReference type="InterPro" id="IPR015424">
    <property type="entry name" value="PyrdxlP-dep_Trfase"/>
</dbReference>
<dbReference type="InterPro" id="IPR015421">
    <property type="entry name" value="PyrdxlP-dep_Trfase_major"/>
</dbReference>
<dbReference type="InterPro" id="IPR015422">
    <property type="entry name" value="PyrdxlP-dep_Trfase_small"/>
</dbReference>
<dbReference type="NCBIfam" id="TIGR00713">
    <property type="entry name" value="hemL"/>
    <property type="match status" value="1"/>
</dbReference>
<dbReference type="NCBIfam" id="NF000818">
    <property type="entry name" value="PRK00062.1"/>
    <property type="match status" value="1"/>
</dbReference>
<dbReference type="PANTHER" id="PTHR43713">
    <property type="entry name" value="GLUTAMATE-1-SEMIALDEHYDE 2,1-AMINOMUTASE"/>
    <property type="match status" value="1"/>
</dbReference>
<dbReference type="PANTHER" id="PTHR43713:SF3">
    <property type="entry name" value="GLUTAMATE-1-SEMIALDEHYDE 2,1-AMINOMUTASE 1, CHLOROPLASTIC-RELATED"/>
    <property type="match status" value="1"/>
</dbReference>
<dbReference type="Pfam" id="PF00202">
    <property type="entry name" value="Aminotran_3"/>
    <property type="match status" value="1"/>
</dbReference>
<dbReference type="SUPFAM" id="SSF53383">
    <property type="entry name" value="PLP-dependent transferases"/>
    <property type="match status" value="1"/>
</dbReference>
<dbReference type="PROSITE" id="PS00600">
    <property type="entry name" value="AA_TRANSFER_CLASS_3"/>
    <property type="match status" value="1"/>
</dbReference>